<feature type="chain" id="PRO_0000274791" description="Thioredoxin reductase">
    <location>
        <begin position="1"/>
        <end position="310"/>
    </location>
</feature>
<feature type="binding site" evidence="2">
    <location>
        <begin position="34"/>
        <end position="41"/>
    </location>
    <ligand>
        <name>FAD</name>
        <dbReference type="ChEBI" id="CHEBI:57692"/>
    </ligand>
</feature>
<feature type="binding site" evidence="2">
    <location>
        <begin position="281"/>
        <end position="290"/>
    </location>
    <ligand>
        <name>FAD</name>
        <dbReference type="ChEBI" id="CHEBI:57692"/>
    </ligand>
</feature>
<feature type="disulfide bond" description="Redox-active" evidence="2">
    <location>
        <begin position="135"/>
        <end position="138"/>
    </location>
</feature>
<reference key="1">
    <citation type="journal article" date="2005" name="PLoS Biol.">
        <title>The genome sequence of Rickettsia felis identifies the first putative conjugative plasmid in an obligate intracellular parasite.</title>
        <authorList>
            <person name="Ogata H."/>
            <person name="Renesto P."/>
            <person name="Audic S."/>
            <person name="Robert C."/>
            <person name="Blanc G."/>
            <person name="Fournier P.-E."/>
            <person name="Parinello H."/>
            <person name="Claverie J.-M."/>
            <person name="Raoult D."/>
        </authorList>
    </citation>
    <scope>NUCLEOTIDE SEQUENCE [LARGE SCALE GENOMIC DNA]</scope>
    <source>
        <strain>ATCC VR-1525 / URRWXCal2</strain>
    </source>
</reference>
<name>TRXB_RICFE</name>
<gene>
    <name type="primary">trxB</name>
    <name type="ordered locus">RF_0681</name>
</gene>
<organism>
    <name type="scientific">Rickettsia felis (strain ATCC VR-1525 / URRWXCal2)</name>
    <name type="common">Rickettsia azadi</name>
    <dbReference type="NCBI Taxonomy" id="315456"/>
    <lineage>
        <taxon>Bacteria</taxon>
        <taxon>Pseudomonadati</taxon>
        <taxon>Pseudomonadota</taxon>
        <taxon>Alphaproteobacteria</taxon>
        <taxon>Rickettsiales</taxon>
        <taxon>Rickettsiaceae</taxon>
        <taxon>Rickettsieae</taxon>
        <taxon>Rickettsia</taxon>
        <taxon>spotted fever group</taxon>
    </lineage>
</organism>
<protein>
    <recommendedName>
        <fullName>Thioredoxin reductase</fullName>
        <shortName>TRXR</shortName>
        <ecNumber>1.8.1.9</ecNumber>
    </recommendedName>
</protein>
<accession>Q4ULP1</accession>
<comment type="catalytic activity">
    <reaction>
        <text>[thioredoxin]-dithiol + NADP(+) = [thioredoxin]-disulfide + NADPH + H(+)</text>
        <dbReference type="Rhea" id="RHEA:20345"/>
        <dbReference type="Rhea" id="RHEA-COMP:10698"/>
        <dbReference type="Rhea" id="RHEA-COMP:10700"/>
        <dbReference type="ChEBI" id="CHEBI:15378"/>
        <dbReference type="ChEBI" id="CHEBI:29950"/>
        <dbReference type="ChEBI" id="CHEBI:50058"/>
        <dbReference type="ChEBI" id="CHEBI:57783"/>
        <dbReference type="ChEBI" id="CHEBI:58349"/>
        <dbReference type="EC" id="1.8.1.9"/>
    </reaction>
</comment>
<comment type="cofactor">
    <cofactor evidence="2">
        <name>FAD</name>
        <dbReference type="ChEBI" id="CHEBI:57692"/>
    </cofactor>
    <text evidence="2">Binds 1 FAD per subunit.</text>
</comment>
<comment type="subunit">
    <text evidence="2">Homodimer.</text>
</comment>
<comment type="subcellular location">
    <subcellularLocation>
        <location evidence="1">Cytoplasm</location>
    </subcellularLocation>
</comment>
<comment type="miscellaneous">
    <text>The active site is a redox-active disulfide bond.</text>
</comment>
<comment type="similarity">
    <text evidence="3">Belongs to the class-II pyridine nucleotide-disulfide oxidoreductase family.</text>
</comment>
<evidence type="ECO:0000250" key="1"/>
<evidence type="ECO:0000250" key="2">
    <source>
        <dbReference type="UniProtKB" id="P0A9P4"/>
    </source>
</evidence>
<evidence type="ECO:0000305" key="3"/>
<keyword id="KW-0963">Cytoplasm</keyword>
<keyword id="KW-1015">Disulfide bond</keyword>
<keyword id="KW-0274">FAD</keyword>
<keyword id="KW-0285">Flavoprotein</keyword>
<keyword id="KW-0521">NADP</keyword>
<keyword id="KW-0560">Oxidoreductase</keyword>
<keyword id="KW-0676">Redox-active center</keyword>
<dbReference type="EC" id="1.8.1.9"/>
<dbReference type="EMBL" id="CP000053">
    <property type="protein sequence ID" value="AAY61532.1"/>
    <property type="molecule type" value="Genomic_DNA"/>
</dbReference>
<dbReference type="SMR" id="Q4ULP1"/>
<dbReference type="STRING" id="315456.RF_0681"/>
<dbReference type="KEGG" id="rfe:RF_0681"/>
<dbReference type="eggNOG" id="COG0492">
    <property type="taxonomic scope" value="Bacteria"/>
</dbReference>
<dbReference type="HOGENOM" id="CLU_031864_5_1_5"/>
<dbReference type="OrthoDB" id="9806179at2"/>
<dbReference type="Proteomes" id="UP000008548">
    <property type="component" value="Chromosome"/>
</dbReference>
<dbReference type="GO" id="GO:0005737">
    <property type="term" value="C:cytoplasm"/>
    <property type="evidence" value="ECO:0007669"/>
    <property type="project" value="UniProtKB-SubCell"/>
</dbReference>
<dbReference type="GO" id="GO:0004791">
    <property type="term" value="F:thioredoxin-disulfide reductase (NADPH) activity"/>
    <property type="evidence" value="ECO:0007669"/>
    <property type="project" value="UniProtKB-EC"/>
</dbReference>
<dbReference type="GO" id="GO:0019430">
    <property type="term" value="P:removal of superoxide radicals"/>
    <property type="evidence" value="ECO:0007669"/>
    <property type="project" value="InterPro"/>
</dbReference>
<dbReference type="Gene3D" id="3.50.50.60">
    <property type="entry name" value="FAD/NAD(P)-binding domain"/>
    <property type="match status" value="2"/>
</dbReference>
<dbReference type="InterPro" id="IPR036188">
    <property type="entry name" value="FAD/NAD-bd_sf"/>
</dbReference>
<dbReference type="InterPro" id="IPR023753">
    <property type="entry name" value="FAD/NAD-binding_dom"/>
</dbReference>
<dbReference type="InterPro" id="IPR050097">
    <property type="entry name" value="Ferredoxin-NADP_redctase_2"/>
</dbReference>
<dbReference type="InterPro" id="IPR008255">
    <property type="entry name" value="Pyr_nucl-diS_OxRdtase_2_AS"/>
</dbReference>
<dbReference type="InterPro" id="IPR005982">
    <property type="entry name" value="Thioredox_Rdtase"/>
</dbReference>
<dbReference type="NCBIfam" id="TIGR01292">
    <property type="entry name" value="TRX_reduct"/>
    <property type="match status" value="1"/>
</dbReference>
<dbReference type="PANTHER" id="PTHR48105">
    <property type="entry name" value="THIOREDOXIN REDUCTASE 1-RELATED-RELATED"/>
    <property type="match status" value="1"/>
</dbReference>
<dbReference type="Pfam" id="PF07992">
    <property type="entry name" value="Pyr_redox_2"/>
    <property type="match status" value="1"/>
</dbReference>
<dbReference type="PRINTS" id="PR00368">
    <property type="entry name" value="FADPNR"/>
</dbReference>
<dbReference type="PRINTS" id="PR00469">
    <property type="entry name" value="PNDRDTASEII"/>
</dbReference>
<dbReference type="SUPFAM" id="SSF51905">
    <property type="entry name" value="FAD/NAD(P)-binding domain"/>
    <property type="match status" value="1"/>
</dbReference>
<dbReference type="PROSITE" id="PS00573">
    <property type="entry name" value="PYRIDINE_REDOX_2"/>
    <property type="match status" value="1"/>
</dbReference>
<proteinExistence type="inferred from homology"/>
<sequence length="310" mass="33382">MKITTKVLIIGSGPAGLSAAIYTARAALKPILINGMQPGGQLTITTDVENYPGFAETVQGPWLMEQMSMQAKNVGTEIISDYVEKVDLSKRPFKVFTGAGNEYEAESIIICTGAEAKWLSIASEQEFRGFGVSACATCDGFFFKNQEIVVVGGGNSAVEEALYLTNHASKVTITHRRDSFRAEKILQDRLFKNPKISVIWDHVVDEIVGSDKPKSVTGVKIQNVHTKEISLVNCSGVFIAIGHAPNTGLFTGQIAMDDDNYIITKSGTTKTSVEGVFAAGDVQDKIYRQAVTAAGSGCMAALEVEKFLNK</sequence>